<reference key="1">
    <citation type="journal article" date="2010" name="Environ. Microbiol.">
        <title>The genome of Syntrophomonas wolfei: new insights into syntrophic metabolism and biohydrogen production.</title>
        <authorList>
            <person name="Sieber J.R."/>
            <person name="Sims D.R."/>
            <person name="Han C."/>
            <person name="Kim E."/>
            <person name="Lykidis A."/>
            <person name="Lapidus A.L."/>
            <person name="McDonnald E."/>
            <person name="Rohlin L."/>
            <person name="Culley D.E."/>
            <person name="Gunsalus R."/>
            <person name="McInerney M.J."/>
        </authorList>
    </citation>
    <scope>NUCLEOTIDE SEQUENCE [LARGE SCALE GENOMIC DNA]</scope>
    <source>
        <strain>DSM 2245B / Goettingen</strain>
    </source>
</reference>
<accession>Q0AZJ6</accession>
<feature type="chain" id="PRO_0000325178" description="Shikimate dehydrogenase (NADP(+))">
    <location>
        <begin position="1"/>
        <end position="290"/>
    </location>
</feature>
<feature type="active site" description="Proton acceptor" evidence="1">
    <location>
        <position position="71"/>
    </location>
</feature>
<feature type="binding site" evidence="1">
    <location>
        <begin position="20"/>
        <end position="22"/>
    </location>
    <ligand>
        <name>shikimate</name>
        <dbReference type="ChEBI" id="CHEBI:36208"/>
    </ligand>
</feature>
<feature type="binding site" evidence="1">
    <location>
        <position position="67"/>
    </location>
    <ligand>
        <name>shikimate</name>
        <dbReference type="ChEBI" id="CHEBI:36208"/>
    </ligand>
</feature>
<feature type="binding site" evidence="1">
    <location>
        <position position="92"/>
    </location>
    <ligand>
        <name>shikimate</name>
        <dbReference type="ChEBI" id="CHEBI:36208"/>
    </ligand>
</feature>
<feature type="binding site" evidence="1">
    <location>
        <position position="107"/>
    </location>
    <ligand>
        <name>shikimate</name>
        <dbReference type="ChEBI" id="CHEBI:36208"/>
    </ligand>
</feature>
<feature type="binding site" evidence="1">
    <location>
        <begin position="130"/>
        <end position="134"/>
    </location>
    <ligand>
        <name>NADP(+)</name>
        <dbReference type="ChEBI" id="CHEBI:58349"/>
    </ligand>
</feature>
<feature type="binding site" evidence="1">
    <location>
        <position position="227"/>
    </location>
    <ligand>
        <name>NADP(+)</name>
        <dbReference type="ChEBI" id="CHEBI:58349"/>
    </ligand>
</feature>
<feature type="binding site" evidence="1">
    <location>
        <position position="229"/>
    </location>
    <ligand>
        <name>shikimate</name>
        <dbReference type="ChEBI" id="CHEBI:36208"/>
    </ligand>
</feature>
<feature type="binding site" evidence="1">
    <location>
        <position position="250"/>
    </location>
    <ligand>
        <name>NADP(+)</name>
        <dbReference type="ChEBI" id="CHEBI:58349"/>
    </ligand>
</feature>
<keyword id="KW-0028">Amino-acid biosynthesis</keyword>
<keyword id="KW-0057">Aromatic amino acid biosynthesis</keyword>
<keyword id="KW-0521">NADP</keyword>
<keyword id="KW-0560">Oxidoreductase</keyword>
<keyword id="KW-1185">Reference proteome</keyword>
<sequence>MPLDIKTELMGLIGYPLQHSLSPLMHNLTLKKMGLNCIYLALEIEEGKLPEIPSAIRTLNFRGLNVTIPYKEKIIPFLDELSPEAAAFGAVNVIKNKNGHLHGYNTDGRGFVEALREEGIDPGERALFIGAGGAARSVAFALAGLGVSRLDFLDLDFSRARQLAEFITSRSSSLASAFLMNTLEFQRLSRTASIIINCSPVGMFPDTGKSPVSKEDLRGSRAVLCDLIYNPLQSRFLSLGQELGLETMNGLGMFVQQGALTLEILLGQKPPLDYMKEVVQNQLEKRVDPD</sequence>
<proteinExistence type="inferred from homology"/>
<name>AROE_SYNWW</name>
<gene>
    <name evidence="1" type="primary">aroE</name>
    <name type="ordered locus">Swol_0524</name>
</gene>
<comment type="function">
    <text evidence="1">Involved in the biosynthesis of the chorismate, which leads to the biosynthesis of aromatic amino acids. Catalyzes the reversible NADPH linked reduction of 3-dehydroshikimate (DHSA) to yield shikimate (SA).</text>
</comment>
<comment type="catalytic activity">
    <reaction evidence="1">
        <text>shikimate + NADP(+) = 3-dehydroshikimate + NADPH + H(+)</text>
        <dbReference type="Rhea" id="RHEA:17737"/>
        <dbReference type="ChEBI" id="CHEBI:15378"/>
        <dbReference type="ChEBI" id="CHEBI:16630"/>
        <dbReference type="ChEBI" id="CHEBI:36208"/>
        <dbReference type="ChEBI" id="CHEBI:57783"/>
        <dbReference type="ChEBI" id="CHEBI:58349"/>
        <dbReference type="EC" id="1.1.1.25"/>
    </reaction>
</comment>
<comment type="pathway">
    <text evidence="1">Metabolic intermediate biosynthesis; chorismate biosynthesis; chorismate from D-erythrose 4-phosphate and phosphoenolpyruvate: step 4/7.</text>
</comment>
<comment type="subunit">
    <text evidence="1">Homodimer.</text>
</comment>
<comment type="similarity">
    <text evidence="1">Belongs to the shikimate dehydrogenase family.</text>
</comment>
<organism>
    <name type="scientific">Syntrophomonas wolfei subsp. wolfei (strain DSM 2245B / Goettingen)</name>
    <dbReference type="NCBI Taxonomy" id="335541"/>
    <lineage>
        <taxon>Bacteria</taxon>
        <taxon>Bacillati</taxon>
        <taxon>Bacillota</taxon>
        <taxon>Clostridia</taxon>
        <taxon>Eubacteriales</taxon>
        <taxon>Syntrophomonadaceae</taxon>
        <taxon>Syntrophomonas</taxon>
    </lineage>
</organism>
<protein>
    <recommendedName>
        <fullName evidence="1">Shikimate dehydrogenase (NADP(+))</fullName>
        <shortName evidence="1">SDH</shortName>
        <ecNumber evidence="1">1.1.1.25</ecNumber>
    </recommendedName>
</protein>
<dbReference type="EC" id="1.1.1.25" evidence="1"/>
<dbReference type="EMBL" id="CP000448">
    <property type="protein sequence ID" value="ABI67858.1"/>
    <property type="molecule type" value="Genomic_DNA"/>
</dbReference>
<dbReference type="RefSeq" id="WP_011639963.1">
    <property type="nucleotide sequence ID" value="NC_008346.1"/>
</dbReference>
<dbReference type="SMR" id="Q0AZJ6"/>
<dbReference type="STRING" id="335541.Swol_0524"/>
<dbReference type="KEGG" id="swo:Swol_0524"/>
<dbReference type="eggNOG" id="COG0169">
    <property type="taxonomic scope" value="Bacteria"/>
</dbReference>
<dbReference type="HOGENOM" id="CLU_044063_4_1_9"/>
<dbReference type="OrthoDB" id="9792692at2"/>
<dbReference type="UniPathway" id="UPA00053">
    <property type="reaction ID" value="UER00087"/>
</dbReference>
<dbReference type="Proteomes" id="UP000001968">
    <property type="component" value="Chromosome"/>
</dbReference>
<dbReference type="GO" id="GO:0050661">
    <property type="term" value="F:NADP binding"/>
    <property type="evidence" value="ECO:0007669"/>
    <property type="project" value="InterPro"/>
</dbReference>
<dbReference type="GO" id="GO:0004764">
    <property type="term" value="F:shikimate 3-dehydrogenase (NADP+) activity"/>
    <property type="evidence" value="ECO:0007669"/>
    <property type="project" value="UniProtKB-UniRule"/>
</dbReference>
<dbReference type="GO" id="GO:0008652">
    <property type="term" value="P:amino acid biosynthetic process"/>
    <property type="evidence" value="ECO:0007669"/>
    <property type="project" value="UniProtKB-KW"/>
</dbReference>
<dbReference type="GO" id="GO:0009073">
    <property type="term" value="P:aromatic amino acid family biosynthetic process"/>
    <property type="evidence" value="ECO:0007669"/>
    <property type="project" value="UniProtKB-KW"/>
</dbReference>
<dbReference type="GO" id="GO:0009423">
    <property type="term" value="P:chorismate biosynthetic process"/>
    <property type="evidence" value="ECO:0007669"/>
    <property type="project" value="UniProtKB-UniRule"/>
</dbReference>
<dbReference type="GO" id="GO:0019632">
    <property type="term" value="P:shikimate metabolic process"/>
    <property type="evidence" value="ECO:0007669"/>
    <property type="project" value="InterPro"/>
</dbReference>
<dbReference type="CDD" id="cd01065">
    <property type="entry name" value="NAD_bind_Shikimate_DH"/>
    <property type="match status" value="1"/>
</dbReference>
<dbReference type="Gene3D" id="3.40.50.10860">
    <property type="entry name" value="Leucine Dehydrogenase, chain A, domain 1"/>
    <property type="match status" value="1"/>
</dbReference>
<dbReference type="Gene3D" id="3.40.50.720">
    <property type="entry name" value="NAD(P)-binding Rossmann-like Domain"/>
    <property type="match status" value="1"/>
</dbReference>
<dbReference type="HAMAP" id="MF_00222">
    <property type="entry name" value="Shikimate_DH_AroE"/>
    <property type="match status" value="1"/>
</dbReference>
<dbReference type="InterPro" id="IPR046346">
    <property type="entry name" value="Aminoacid_DH-like_N_sf"/>
</dbReference>
<dbReference type="InterPro" id="IPR036291">
    <property type="entry name" value="NAD(P)-bd_dom_sf"/>
</dbReference>
<dbReference type="InterPro" id="IPR041121">
    <property type="entry name" value="SDH_C"/>
</dbReference>
<dbReference type="InterPro" id="IPR011342">
    <property type="entry name" value="Shikimate_DH"/>
</dbReference>
<dbReference type="InterPro" id="IPR013708">
    <property type="entry name" value="Shikimate_DH-bd_N"/>
</dbReference>
<dbReference type="InterPro" id="IPR022893">
    <property type="entry name" value="Shikimate_DH_fam"/>
</dbReference>
<dbReference type="NCBIfam" id="TIGR00507">
    <property type="entry name" value="aroE"/>
    <property type="match status" value="1"/>
</dbReference>
<dbReference type="PANTHER" id="PTHR21089:SF1">
    <property type="entry name" value="BIFUNCTIONAL 3-DEHYDROQUINATE DEHYDRATASE_SHIKIMATE DEHYDROGENASE, CHLOROPLASTIC"/>
    <property type="match status" value="1"/>
</dbReference>
<dbReference type="PANTHER" id="PTHR21089">
    <property type="entry name" value="SHIKIMATE DEHYDROGENASE"/>
    <property type="match status" value="1"/>
</dbReference>
<dbReference type="Pfam" id="PF18317">
    <property type="entry name" value="SDH_C"/>
    <property type="match status" value="1"/>
</dbReference>
<dbReference type="Pfam" id="PF08501">
    <property type="entry name" value="Shikimate_dh_N"/>
    <property type="match status" value="1"/>
</dbReference>
<dbReference type="SUPFAM" id="SSF53223">
    <property type="entry name" value="Aminoacid dehydrogenase-like, N-terminal domain"/>
    <property type="match status" value="1"/>
</dbReference>
<dbReference type="SUPFAM" id="SSF51735">
    <property type="entry name" value="NAD(P)-binding Rossmann-fold domains"/>
    <property type="match status" value="1"/>
</dbReference>
<evidence type="ECO:0000255" key="1">
    <source>
        <dbReference type="HAMAP-Rule" id="MF_00222"/>
    </source>
</evidence>